<dbReference type="EC" id="2.3.1.46" evidence="1 2"/>
<dbReference type="EMBL" id="AM902716">
    <property type="protein sequence ID" value="CAP40749.1"/>
    <property type="molecule type" value="Genomic_DNA"/>
</dbReference>
<dbReference type="SMR" id="A9I0E6"/>
<dbReference type="STRING" id="94624.Bpet0417"/>
<dbReference type="ESTHER" id="borpd-metx">
    <property type="family name" value="Homoserine_transacetylase"/>
</dbReference>
<dbReference type="KEGG" id="bpt:Bpet0417"/>
<dbReference type="eggNOG" id="COG2021">
    <property type="taxonomic scope" value="Bacteria"/>
</dbReference>
<dbReference type="UniPathway" id="UPA00051">
    <property type="reaction ID" value="UER00075"/>
</dbReference>
<dbReference type="Proteomes" id="UP000001225">
    <property type="component" value="Chromosome"/>
</dbReference>
<dbReference type="GO" id="GO:0005737">
    <property type="term" value="C:cytoplasm"/>
    <property type="evidence" value="ECO:0007669"/>
    <property type="project" value="UniProtKB-SubCell"/>
</dbReference>
<dbReference type="GO" id="GO:0004414">
    <property type="term" value="F:homoserine O-acetyltransferase activity"/>
    <property type="evidence" value="ECO:0007669"/>
    <property type="project" value="TreeGrafter"/>
</dbReference>
<dbReference type="GO" id="GO:0008899">
    <property type="term" value="F:homoserine O-succinyltransferase activity"/>
    <property type="evidence" value="ECO:0007669"/>
    <property type="project" value="UniProtKB-UniRule"/>
</dbReference>
<dbReference type="GO" id="GO:0009092">
    <property type="term" value="P:homoserine metabolic process"/>
    <property type="evidence" value="ECO:0007669"/>
    <property type="project" value="TreeGrafter"/>
</dbReference>
<dbReference type="GO" id="GO:0009086">
    <property type="term" value="P:methionine biosynthetic process"/>
    <property type="evidence" value="ECO:0007669"/>
    <property type="project" value="UniProtKB-UniRule"/>
</dbReference>
<dbReference type="FunFam" id="1.10.1740.110:FF:000001">
    <property type="entry name" value="Homoserine O-acetyltransferase"/>
    <property type="match status" value="1"/>
</dbReference>
<dbReference type="Gene3D" id="1.10.1740.110">
    <property type="match status" value="1"/>
</dbReference>
<dbReference type="Gene3D" id="3.40.50.1820">
    <property type="entry name" value="alpha/beta hydrolase"/>
    <property type="match status" value="1"/>
</dbReference>
<dbReference type="HAMAP" id="MF_00296">
    <property type="entry name" value="MetX_acyltransf"/>
    <property type="match status" value="1"/>
</dbReference>
<dbReference type="InterPro" id="IPR000073">
    <property type="entry name" value="AB_hydrolase_1"/>
</dbReference>
<dbReference type="InterPro" id="IPR029058">
    <property type="entry name" value="AB_hydrolase_fold"/>
</dbReference>
<dbReference type="InterPro" id="IPR008220">
    <property type="entry name" value="HAT_MetX-like"/>
</dbReference>
<dbReference type="NCBIfam" id="TIGR01392">
    <property type="entry name" value="homoserO_Ac_trn"/>
    <property type="match status" value="1"/>
</dbReference>
<dbReference type="NCBIfam" id="NF001209">
    <property type="entry name" value="PRK00175.1"/>
    <property type="match status" value="1"/>
</dbReference>
<dbReference type="PANTHER" id="PTHR32268">
    <property type="entry name" value="HOMOSERINE O-ACETYLTRANSFERASE"/>
    <property type="match status" value="1"/>
</dbReference>
<dbReference type="PANTHER" id="PTHR32268:SF11">
    <property type="entry name" value="HOMOSERINE O-ACETYLTRANSFERASE"/>
    <property type="match status" value="1"/>
</dbReference>
<dbReference type="Pfam" id="PF00561">
    <property type="entry name" value="Abhydrolase_1"/>
    <property type="match status" value="1"/>
</dbReference>
<dbReference type="PIRSF" id="PIRSF000443">
    <property type="entry name" value="Homoser_Ac_trans"/>
    <property type="match status" value="1"/>
</dbReference>
<dbReference type="SUPFAM" id="SSF53474">
    <property type="entry name" value="alpha/beta-Hydrolases"/>
    <property type="match status" value="1"/>
</dbReference>
<name>METXS_BORPD</name>
<sequence>MTTPVPVPNGGPAPAAVPAAAEPGSVGIVTPQLIRFDTPLPLASGQSLQSYELAVETYGTLNAGRTNAVLVCHALNASHHVAGLAADDPNDVGWWDNMVGPGKPLDTNRFFVIGVNNLGSCFGSTGPASINPATGHPWGAAFPVLTVEDWVHAQARLADHFGIERFAAVMGGSLGGMQALSWAITCPERVAHCIVIASTPRLSAQNIGFNEVARRAIITDPDFHGGDYYAHNTVPRRGLSVARMIGHITYLSDDDMAEKFGRTQREPAEGGAYRYGYDVEFEVESYLRYQGEKFSRYFDANTYLLITRALDYFDPARGTGGDLARALKPAQADFLLVSFSTDWRFPPERSREIVRALLKNGSPVTYAEIDAPHGHDAFLLDDARYHAVVRGYYERIARELGLDEPAAGAAPAAAEPACAEGCAA</sequence>
<accession>A9I0E6</accession>
<comment type="function">
    <text evidence="2">Transfers a succinyl group from succinyl-CoA to L-homoserine, forming succinyl-L-homoserine. In vitro, also has serine succinyl transferase activity.</text>
</comment>
<comment type="catalytic activity">
    <reaction evidence="1 2">
        <text>L-homoserine + succinyl-CoA = O-succinyl-L-homoserine + CoA</text>
        <dbReference type="Rhea" id="RHEA:22008"/>
        <dbReference type="ChEBI" id="CHEBI:57287"/>
        <dbReference type="ChEBI" id="CHEBI:57292"/>
        <dbReference type="ChEBI" id="CHEBI:57476"/>
        <dbReference type="ChEBI" id="CHEBI:57661"/>
        <dbReference type="EC" id="2.3.1.46"/>
    </reaction>
</comment>
<comment type="pathway">
    <text evidence="1">Amino-acid biosynthesis; L-methionine biosynthesis via de novo pathway; O-succinyl-L-homoserine from L-homoserine: step 1/1.</text>
</comment>
<comment type="subunit">
    <text evidence="1">Homodimer.</text>
</comment>
<comment type="subcellular location">
    <subcellularLocation>
        <location evidence="1">Cytoplasm</location>
    </subcellularLocation>
</comment>
<comment type="similarity">
    <text evidence="1">Belongs to the AB hydrolase superfamily. MetX family.</text>
</comment>
<protein>
    <recommendedName>
        <fullName evidence="1">Homoserine O-succinyltransferase</fullName>
        <shortName evidence="1 3">HST</shortName>
        <ecNumber evidence="1 2">2.3.1.46</ecNumber>
    </recommendedName>
    <alternativeName>
        <fullName evidence="1">Homoserine transsuccinylase</fullName>
        <shortName evidence="1">HTS</shortName>
    </alternativeName>
</protein>
<gene>
    <name evidence="1 3" type="primary">metXS</name>
    <name type="ordered locus">Bpet0417</name>
</gene>
<keyword id="KW-0012">Acyltransferase</keyword>
<keyword id="KW-0028">Amino-acid biosynthesis</keyword>
<keyword id="KW-0963">Cytoplasm</keyword>
<keyword id="KW-0486">Methionine biosynthesis</keyword>
<keyword id="KW-0808">Transferase</keyword>
<proteinExistence type="evidence at protein level"/>
<evidence type="ECO:0000255" key="1">
    <source>
        <dbReference type="HAMAP-Rule" id="MF_00296"/>
    </source>
</evidence>
<evidence type="ECO:0000269" key="2">
    <source>
    </source>
</evidence>
<evidence type="ECO:0000303" key="3">
    <source>
    </source>
</evidence>
<evidence type="ECO:0000305" key="4">
    <source>
    </source>
</evidence>
<organism>
    <name type="scientific">Bordetella petrii (strain ATCC BAA-461 / DSM 12804 / CCUG 43448)</name>
    <dbReference type="NCBI Taxonomy" id="340100"/>
    <lineage>
        <taxon>Bacteria</taxon>
        <taxon>Pseudomonadati</taxon>
        <taxon>Pseudomonadota</taxon>
        <taxon>Betaproteobacteria</taxon>
        <taxon>Burkholderiales</taxon>
        <taxon>Alcaligenaceae</taxon>
        <taxon>Bordetella</taxon>
    </lineage>
</organism>
<feature type="chain" id="PRO_1000115211" description="Homoserine O-succinyltransferase">
    <location>
        <begin position="1"/>
        <end position="424"/>
    </location>
</feature>
<feature type="domain" description="AB hydrolase-1" evidence="1">
    <location>
        <begin position="67"/>
        <end position="381"/>
    </location>
</feature>
<feature type="active site" description="Nucleophile" evidence="1">
    <location>
        <position position="173"/>
    </location>
</feature>
<feature type="active site" evidence="1">
    <location>
        <position position="342"/>
    </location>
</feature>
<feature type="active site" evidence="1">
    <location>
        <position position="375"/>
    </location>
</feature>
<feature type="binding site" evidence="1">
    <location>
        <position position="243"/>
    </location>
    <ligand>
        <name>substrate</name>
    </ligand>
</feature>
<feature type="binding site" evidence="1">
    <location>
        <position position="376"/>
    </location>
    <ligand>
        <name>substrate</name>
    </ligand>
</feature>
<feature type="site" description="Important for acyl-CoA specificity" evidence="1 4">
    <location>
        <position position="344"/>
    </location>
</feature>
<reference key="1">
    <citation type="journal article" date="2008" name="BMC Genomics">
        <title>The missing link: Bordetella petrii is endowed with both the metabolic versatility of environmental bacteria and virulence traits of pathogenic Bordetellae.</title>
        <authorList>
            <person name="Gross R."/>
            <person name="Guzman C.A."/>
            <person name="Sebaihia M."/>
            <person name="Martin dos Santos V.A.P."/>
            <person name="Pieper D.H."/>
            <person name="Koebnik R."/>
            <person name="Lechner M."/>
            <person name="Bartels D."/>
            <person name="Buhrmester J."/>
            <person name="Choudhuri J.V."/>
            <person name="Ebensen T."/>
            <person name="Gaigalat L."/>
            <person name="Herrmann S."/>
            <person name="Khachane A.N."/>
            <person name="Larisch C."/>
            <person name="Link S."/>
            <person name="Linke B."/>
            <person name="Meyer F."/>
            <person name="Mormann S."/>
            <person name="Nakunst D."/>
            <person name="Rueckert C."/>
            <person name="Schneiker-Bekel S."/>
            <person name="Schulze K."/>
            <person name="Voerholter F.-J."/>
            <person name="Yevsa T."/>
            <person name="Engle J.T."/>
            <person name="Goldman W.E."/>
            <person name="Puehler A."/>
            <person name="Goebel U.B."/>
            <person name="Goesmann A."/>
            <person name="Bloecker H."/>
            <person name="Kaiser O."/>
            <person name="Martinez-Arias R."/>
        </authorList>
    </citation>
    <scope>NUCLEOTIDE SEQUENCE [LARGE SCALE GENOMIC DNA]</scope>
    <source>
        <strain>ATCC BAA-461 / DSM 12804 / CCUG 43448</strain>
    </source>
</reference>
<reference key="2">
    <citation type="journal article" date="2017" name="Nat. Chem. Biol.">
        <title>Parallel evolution of non-homologous isofunctional enzymes in methionine biosynthesis.</title>
        <authorList>
            <person name="Bastard K."/>
            <person name="Perret A."/>
            <person name="Mariage A."/>
            <person name="Bessonnet T."/>
            <person name="Pinet-Turpault A."/>
            <person name="Petit J.L."/>
            <person name="Darii E."/>
            <person name="Bazire P."/>
            <person name="Vergne-Vaxelaire C."/>
            <person name="Brewee C."/>
            <person name="Debard A."/>
            <person name="Pellouin V."/>
            <person name="Besnard-Gonnet M."/>
            <person name="Artiguenave F."/>
            <person name="Medigue C."/>
            <person name="Vallenet D."/>
            <person name="Danchin A."/>
            <person name="Zaparucha A."/>
            <person name="Weissenbach J."/>
            <person name="Salanoubat M."/>
            <person name="de Berardinis V."/>
        </authorList>
    </citation>
    <scope>FUNCTION</scope>
    <scope>CATALYTIC ACTIVITY</scope>
</reference>